<accession>P19320</accession>
<accession>A8K6R7</accession>
<accession>B4DKS4</accession>
<accession>E9PDD1</accession>
<accession>Q6NUP8</accession>
<dbReference type="EMBL" id="M30257">
    <property type="protein sequence ID" value="AAA51917.1"/>
    <property type="molecule type" value="mRNA"/>
</dbReference>
<dbReference type="EMBL" id="X53051">
    <property type="protein sequence ID" value="CAA37218.1"/>
    <property type="molecule type" value="mRNA"/>
</dbReference>
<dbReference type="EMBL" id="M60335">
    <property type="protein sequence ID" value="AAA61269.1"/>
    <property type="molecule type" value="mRNA"/>
</dbReference>
<dbReference type="EMBL" id="M73255">
    <property type="protein sequence ID" value="AAA61270.1"/>
    <property type="molecule type" value="Genomic_DNA"/>
</dbReference>
<dbReference type="EMBL" id="AF536818">
    <property type="protein sequence ID" value="AAM96190.1"/>
    <property type="molecule type" value="Genomic_DNA"/>
</dbReference>
<dbReference type="EMBL" id="AK291732">
    <property type="protein sequence ID" value="BAF84421.1"/>
    <property type="molecule type" value="mRNA"/>
</dbReference>
<dbReference type="EMBL" id="AK296692">
    <property type="protein sequence ID" value="BAG59286.1"/>
    <property type="molecule type" value="mRNA"/>
</dbReference>
<dbReference type="EMBL" id="AC093428">
    <property type="status" value="NOT_ANNOTATED_CDS"/>
    <property type="molecule type" value="Genomic_DNA"/>
</dbReference>
<dbReference type="EMBL" id="CH471097">
    <property type="protein sequence ID" value="EAW72950.1"/>
    <property type="molecule type" value="Genomic_DNA"/>
</dbReference>
<dbReference type="EMBL" id="BC017276">
    <property type="protein sequence ID" value="AAH17276.3"/>
    <property type="molecule type" value="mRNA"/>
</dbReference>
<dbReference type="EMBL" id="BC068490">
    <property type="protein sequence ID" value="AAH68490.2"/>
    <property type="molecule type" value="mRNA"/>
</dbReference>
<dbReference type="EMBL" id="BC085003">
    <property type="protein sequence ID" value="AAH85003.1"/>
    <property type="molecule type" value="mRNA"/>
</dbReference>
<dbReference type="EMBL" id="M92431">
    <property type="status" value="NOT_ANNOTATED_CDS"/>
    <property type="molecule type" value="Genomic_DNA"/>
</dbReference>
<dbReference type="CCDS" id="CCDS55617.1">
    <molecule id="P19320-3"/>
</dbReference>
<dbReference type="CCDS" id="CCDS773.1">
    <molecule id="P19320-1"/>
</dbReference>
<dbReference type="CCDS" id="CCDS774.1">
    <molecule id="P19320-2"/>
</dbReference>
<dbReference type="PIR" id="A41288">
    <property type="entry name" value="A41288"/>
</dbReference>
<dbReference type="PIR" id="B41288">
    <property type="entry name" value="B41288"/>
</dbReference>
<dbReference type="RefSeq" id="NP_001069.1">
    <molecule id="P19320-1"/>
    <property type="nucleotide sequence ID" value="NM_001078.4"/>
</dbReference>
<dbReference type="RefSeq" id="NP_001186763.1">
    <molecule id="P19320-3"/>
    <property type="nucleotide sequence ID" value="NM_001199834.2"/>
</dbReference>
<dbReference type="RefSeq" id="NP_542413.1">
    <molecule id="P19320-2"/>
    <property type="nucleotide sequence ID" value="NM_080682.3"/>
</dbReference>
<dbReference type="PDB" id="1IJ9">
    <property type="method" value="X-ray"/>
    <property type="resolution" value="3.00 A"/>
    <property type="chains" value="A=25-220"/>
</dbReference>
<dbReference type="PDB" id="1VCA">
    <property type="method" value="X-ray"/>
    <property type="resolution" value="1.80 A"/>
    <property type="chains" value="A/B=25-226"/>
</dbReference>
<dbReference type="PDB" id="1VSC">
    <property type="method" value="X-ray"/>
    <property type="resolution" value="1.90 A"/>
    <property type="chains" value="A/B=25-219"/>
</dbReference>
<dbReference type="PDBsum" id="1IJ9"/>
<dbReference type="PDBsum" id="1VCA"/>
<dbReference type="PDBsum" id="1VSC"/>
<dbReference type="SMR" id="P19320"/>
<dbReference type="BioGRID" id="113255">
    <property type="interactions" value="467"/>
</dbReference>
<dbReference type="CORUM" id="P19320"/>
<dbReference type="FunCoup" id="P19320">
    <property type="interactions" value="541"/>
</dbReference>
<dbReference type="IntAct" id="P19320">
    <property type="interactions" value="650"/>
</dbReference>
<dbReference type="MINT" id="P19320"/>
<dbReference type="STRING" id="9606.ENSP00000294728"/>
<dbReference type="BindingDB" id="P19320"/>
<dbReference type="ChEMBL" id="CHEMBL3735"/>
<dbReference type="DrugBank" id="DB01136">
    <property type="generic name" value="Carvedilol"/>
</dbReference>
<dbReference type="DrugBank" id="DB11338">
    <property type="generic name" value="Clove oil"/>
</dbReference>
<dbReference type="DrugBank" id="DB00898">
    <property type="generic name" value="Ethanol"/>
</dbReference>
<dbReference type="DrugBank" id="DB05399">
    <property type="generic name" value="Succinobucol"/>
</dbReference>
<dbReference type="GlyConnect" id="1984">
    <property type="glycosylation" value="6 N-Linked glycans (2 sites)"/>
</dbReference>
<dbReference type="GlyCosmos" id="P19320">
    <property type="glycosylation" value="10 sites, 7 glycans"/>
</dbReference>
<dbReference type="GlyGen" id="P19320">
    <property type="glycosylation" value="10 sites, 55 N-linked glycans (5 sites), 1 O-linked glycan (3 sites)"/>
</dbReference>
<dbReference type="iPTMnet" id="P19320"/>
<dbReference type="PhosphoSitePlus" id="P19320"/>
<dbReference type="BioMuta" id="VCAM1"/>
<dbReference type="DMDM" id="137560"/>
<dbReference type="CPTAC" id="CPTAC-5950"/>
<dbReference type="jPOST" id="P19320"/>
<dbReference type="MassIVE" id="P19320"/>
<dbReference type="PaxDb" id="9606-ENSP00000294728"/>
<dbReference type="PeptideAtlas" id="P19320"/>
<dbReference type="ProteomicsDB" id="19636"/>
<dbReference type="ProteomicsDB" id="53645">
    <molecule id="P19320-1"/>
</dbReference>
<dbReference type="ProteomicsDB" id="53646">
    <molecule id="P19320-2"/>
</dbReference>
<dbReference type="ABCD" id="P19320">
    <property type="antibodies" value="6 sequenced antibodies"/>
</dbReference>
<dbReference type="Antibodypedia" id="3955">
    <property type="antibodies" value="2214 antibodies from 52 providers"/>
</dbReference>
<dbReference type="CPTC" id="P19320">
    <property type="antibodies" value="1 antibody"/>
</dbReference>
<dbReference type="DNASU" id="7412"/>
<dbReference type="Ensembl" id="ENST00000294728.7">
    <molecule id="P19320-1"/>
    <property type="protein sequence ID" value="ENSP00000294728.2"/>
    <property type="gene ID" value="ENSG00000162692.12"/>
</dbReference>
<dbReference type="Ensembl" id="ENST00000347652.6">
    <molecule id="P19320-2"/>
    <property type="protein sequence ID" value="ENSP00000304611.2"/>
    <property type="gene ID" value="ENSG00000162692.12"/>
</dbReference>
<dbReference type="Ensembl" id="ENST00000370119.8">
    <molecule id="P19320-3"/>
    <property type="protein sequence ID" value="ENSP00000359137.3"/>
    <property type="gene ID" value="ENSG00000162692.12"/>
</dbReference>
<dbReference type="GeneID" id="7412"/>
<dbReference type="KEGG" id="hsa:7412"/>
<dbReference type="MANE-Select" id="ENST00000294728.7">
    <property type="protein sequence ID" value="ENSP00000294728.2"/>
    <property type="RefSeq nucleotide sequence ID" value="NM_001078.4"/>
    <property type="RefSeq protein sequence ID" value="NP_001069.1"/>
</dbReference>
<dbReference type="UCSC" id="uc001dti.5">
    <molecule id="P19320-1"/>
    <property type="organism name" value="human"/>
</dbReference>
<dbReference type="AGR" id="HGNC:12663"/>
<dbReference type="CTD" id="7412"/>
<dbReference type="DisGeNET" id="7412"/>
<dbReference type="GeneCards" id="VCAM1"/>
<dbReference type="HGNC" id="HGNC:12663">
    <property type="gene designation" value="VCAM1"/>
</dbReference>
<dbReference type="HPA" id="ENSG00000162692">
    <property type="expression patterns" value="Tissue enriched (lymphoid)"/>
</dbReference>
<dbReference type="MIM" id="192225">
    <property type="type" value="gene"/>
</dbReference>
<dbReference type="neXtProt" id="NX_P19320"/>
<dbReference type="OpenTargets" id="ENSG00000162692"/>
<dbReference type="PharmGKB" id="PA37286"/>
<dbReference type="VEuPathDB" id="HostDB:ENSG00000162692"/>
<dbReference type="eggNOG" id="ENOG502QSKQ">
    <property type="taxonomic scope" value="Eukaryota"/>
</dbReference>
<dbReference type="GeneTree" id="ENSGT00940000156511"/>
<dbReference type="InParanoid" id="P19320"/>
<dbReference type="OMA" id="TYVCEGV"/>
<dbReference type="OrthoDB" id="10045578at2759"/>
<dbReference type="PAN-GO" id="P19320">
    <property type="GO annotations" value="3 GO annotations based on evolutionary models"/>
</dbReference>
<dbReference type="PhylomeDB" id="P19320"/>
<dbReference type="TreeFam" id="TF333571"/>
<dbReference type="PathwayCommons" id="P19320"/>
<dbReference type="Reactome" id="R-HSA-198933">
    <property type="pathway name" value="Immunoregulatory interactions between a Lymphoid and a non-Lymphoid cell"/>
</dbReference>
<dbReference type="Reactome" id="R-HSA-216083">
    <property type="pathway name" value="Integrin cell surface interactions"/>
</dbReference>
<dbReference type="Reactome" id="R-HSA-6785807">
    <property type="pathway name" value="Interleukin-4 and Interleukin-13 signaling"/>
</dbReference>
<dbReference type="Reactome" id="R-HSA-877300">
    <property type="pathway name" value="Interferon gamma signaling"/>
</dbReference>
<dbReference type="SignaLink" id="P19320"/>
<dbReference type="SIGNOR" id="P19320"/>
<dbReference type="BioGRID-ORCS" id="7412">
    <property type="hits" value="13 hits in 1156 CRISPR screens"/>
</dbReference>
<dbReference type="ChiTaRS" id="VCAM1">
    <property type="organism name" value="human"/>
</dbReference>
<dbReference type="EvolutionaryTrace" id="P19320"/>
<dbReference type="GeneWiki" id="VCAM-1"/>
<dbReference type="GenomeRNAi" id="7412"/>
<dbReference type="Pharos" id="P19320">
    <property type="development level" value="Tchem"/>
</dbReference>
<dbReference type="PRO" id="PR:P19320"/>
<dbReference type="Proteomes" id="UP000005640">
    <property type="component" value="Chromosome 1"/>
</dbReference>
<dbReference type="RNAct" id="P19320">
    <property type="molecule type" value="protein"/>
</dbReference>
<dbReference type="Bgee" id="ENSG00000162692">
    <property type="expression patterns" value="Expressed in cartilage tissue and 181 other cell types or tissues"/>
</dbReference>
<dbReference type="ExpressionAtlas" id="P19320">
    <property type="expression patterns" value="baseline and differential"/>
</dbReference>
<dbReference type="GO" id="GO:0071065">
    <property type="term" value="C:alpha9-beta1 integrin-vascular cell adhesion molecule-1 complex"/>
    <property type="evidence" value="ECO:0000314"/>
    <property type="project" value="BHF-UCL"/>
</dbReference>
<dbReference type="GO" id="GO:0045177">
    <property type="term" value="C:apical part of cell"/>
    <property type="evidence" value="ECO:0000314"/>
    <property type="project" value="BHF-UCL"/>
</dbReference>
<dbReference type="GO" id="GO:0009986">
    <property type="term" value="C:cell surface"/>
    <property type="evidence" value="ECO:0000314"/>
    <property type="project" value="UniProtKB"/>
</dbReference>
<dbReference type="GO" id="GO:0005769">
    <property type="term" value="C:early endosome"/>
    <property type="evidence" value="ECO:0000314"/>
    <property type="project" value="UniProtKB"/>
</dbReference>
<dbReference type="GO" id="GO:0005783">
    <property type="term" value="C:endoplasmic reticulum"/>
    <property type="evidence" value="ECO:0000314"/>
    <property type="project" value="UniProtKB"/>
</dbReference>
<dbReference type="GO" id="GO:0009897">
    <property type="term" value="C:external side of plasma membrane"/>
    <property type="evidence" value="ECO:0000314"/>
    <property type="project" value="BHF-UCL"/>
</dbReference>
<dbReference type="GO" id="GO:0070062">
    <property type="term" value="C:extracellular exosome"/>
    <property type="evidence" value="ECO:0007005"/>
    <property type="project" value="UniProtKB"/>
</dbReference>
<dbReference type="GO" id="GO:0005615">
    <property type="term" value="C:extracellular space"/>
    <property type="evidence" value="ECO:0000314"/>
    <property type="project" value="BHF-UCL"/>
</dbReference>
<dbReference type="GO" id="GO:0030175">
    <property type="term" value="C:filopodium"/>
    <property type="evidence" value="ECO:0000314"/>
    <property type="project" value="BHF-UCL"/>
</dbReference>
<dbReference type="GO" id="GO:0005794">
    <property type="term" value="C:Golgi apparatus"/>
    <property type="evidence" value="ECO:0000314"/>
    <property type="project" value="UniProtKB"/>
</dbReference>
<dbReference type="GO" id="GO:0005902">
    <property type="term" value="C:microvillus"/>
    <property type="evidence" value="ECO:0000314"/>
    <property type="project" value="BHF-UCL"/>
</dbReference>
<dbReference type="GO" id="GO:0005886">
    <property type="term" value="C:plasma membrane"/>
    <property type="evidence" value="ECO:0000318"/>
    <property type="project" value="GO_Central"/>
</dbReference>
<dbReference type="GO" id="GO:0002102">
    <property type="term" value="C:podosome"/>
    <property type="evidence" value="ECO:0000314"/>
    <property type="project" value="BHF-UCL"/>
</dbReference>
<dbReference type="GO" id="GO:0042383">
    <property type="term" value="C:sarcolemma"/>
    <property type="evidence" value="ECO:0007669"/>
    <property type="project" value="Ensembl"/>
</dbReference>
<dbReference type="GO" id="GO:0098631">
    <property type="term" value="F:cell adhesion mediator activity"/>
    <property type="evidence" value="ECO:0000314"/>
    <property type="project" value="UniProt"/>
</dbReference>
<dbReference type="GO" id="GO:0050839">
    <property type="term" value="F:cell adhesion molecule binding"/>
    <property type="evidence" value="ECO:0000314"/>
    <property type="project" value="BHF-UCL"/>
</dbReference>
<dbReference type="GO" id="GO:0005178">
    <property type="term" value="F:integrin binding"/>
    <property type="evidence" value="ECO:0000314"/>
    <property type="project" value="BHF-UCL"/>
</dbReference>
<dbReference type="GO" id="GO:0008131">
    <property type="term" value="F:primary methylamine oxidase activity"/>
    <property type="evidence" value="ECO:0000314"/>
    <property type="project" value="UniProtKB"/>
</dbReference>
<dbReference type="GO" id="GO:0009308">
    <property type="term" value="P:amine metabolic process"/>
    <property type="evidence" value="ECO:0000314"/>
    <property type="project" value="UniProtKB"/>
</dbReference>
<dbReference type="GO" id="GO:0030183">
    <property type="term" value="P:B cell differentiation"/>
    <property type="evidence" value="ECO:0000305"/>
    <property type="project" value="BHF-UCL"/>
</dbReference>
<dbReference type="GO" id="GO:0060945">
    <property type="term" value="P:cardiac neuron differentiation"/>
    <property type="evidence" value="ECO:0007669"/>
    <property type="project" value="Ensembl"/>
</dbReference>
<dbReference type="GO" id="GO:0007155">
    <property type="term" value="P:cell adhesion"/>
    <property type="evidence" value="ECO:0000314"/>
    <property type="project" value="BHF-UCL"/>
</dbReference>
<dbReference type="GO" id="GO:0060326">
    <property type="term" value="P:cell chemotaxis"/>
    <property type="evidence" value="ECO:0007669"/>
    <property type="project" value="Ensembl"/>
</dbReference>
<dbReference type="GO" id="GO:0033631">
    <property type="term" value="P:cell-cell adhesion mediated by integrin"/>
    <property type="evidence" value="ECO:0000316"/>
    <property type="project" value="ARUK-UCL"/>
</dbReference>
<dbReference type="GO" id="GO:0007160">
    <property type="term" value="P:cell-matrix adhesion"/>
    <property type="evidence" value="ECO:0000314"/>
    <property type="project" value="UniProtKB"/>
</dbReference>
<dbReference type="GO" id="GO:1904646">
    <property type="term" value="P:cellular response to amyloid-beta"/>
    <property type="evidence" value="ECO:0000316"/>
    <property type="project" value="ARUK-UCL"/>
</dbReference>
<dbReference type="GO" id="GO:0071356">
    <property type="term" value="P:cellular response to tumor necrosis factor"/>
    <property type="evidence" value="ECO:0007669"/>
    <property type="project" value="Ensembl"/>
</dbReference>
<dbReference type="GO" id="GO:0035924">
    <property type="term" value="P:cellular response to vascular endothelial growth factor stimulus"/>
    <property type="evidence" value="ECO:0007669"/>
    <property type="project" value="Ensembl"/>
</dbReference>
<dbReference type="GO" id="GO:0002544">
    <property type="term" value="P:chronic inflammatory response"/>
    <property type="evidence" value="ECO:0007669"/>
    <property type="project" value="Ensembl"/>
</dbReference>
<dbReference type="GO" id="GO:0007157">
    <property type="term" value="P:heterophilic cell-cell adhesion via plasma membrane cell adhesion molecules"/>
    <property type="evidence" value="ECO:0000314"/>
    <property type="project" value="BHF-UCL"/>
</dbReference>
<dbReference type="GO" id="GO:0034113">
    <property type="term" value="P:heterotypic cell-cell adhesion"/>
    <property type="evidence" value="ECO:0000316"/>
    <property type="project" value="ARUK-UCL"/>
</dbReference>
<dbReference type="GO" id="GO:0006954">
    <property type="term" value="P:inflammatory response"/>
    <property type="evidence" value="ECO:0000314"/>
    <property type="project" value="UniProt"/>
</dbReference>
<dbReference type="GO" id="GO:0060384">
    <property type="term" value="P:innervation"/>
    <property type="evidence" value="ECO:0007669"/>
    <property type="project" value="Ensembl"/>
</dbReference>
<dbReference type="GO" id="GO:0007159">
    <property type="term" value="P:leukocyte cell-cell adhesion"/>
    <property type="evidence" value="ECO:0000314"/>
    <property type="project" value="BHF-UCL"/>
</dbReference>
<dbReference type="GO" id="GO:0050901">
    <property type="term" value="P:leukocyte tethering or rolling"/>
    <property type="evidence" value="ECO:0000314"/>
    <property type="project" value="UniProtKB"/>
</dbReference>
<dbReference type="GO" id="GO:0022614">
    <property type="term" value="P:membrane to membrane docking"/>
    <property type="evidence" value="ECO:0000270"/>
    <property type="project" value="BHF-UCL"/>
</dbReference>
<dbReference type="GO" id="GO:0042102">
    <property type="term" value="P:positive regulation of T cell proliferation"/>
    <property type="evidence" value="ECO:0000314"/>
    <property type="project" value="BHF-UCL"/>
</dbReference>
<dbReference type="GO" id="GO:0045471">
    <property type="term" value="P:response to ethanol"/>
    <property type="evidence" value="ECO:0007669"/>
    <property type="project" value="Ensembl"/>
</dbReference>
<dbReference type="GO" id="GO:0001666">
    <property type="term" value="P:response to hypoxia"/>
    <property type="evidence" value="ECO:0007669"/>
    <property type="project" value="Ensembl"/>
</dbReference>
<dbReference type="GO" id="GO:0010212">
    <property type="term" value="P:response to ionizing radiation"/>
    <property type="evidence" value="ECO:0007669"/>
    <property type="project" value="Ensembl"/>
</dbReference>
<dbReference type="GO" id="GO:0032496">
    <property type="term" value="P:response to lipopolysaccharide"/>
    <property type="evidence" value="ECO:0007669"/>
    <property type="project" value="Ensembl"/>
</dbReference>
<dbReference type="GO" id="GO:0035094">
    <property type="term" value="P:response to nicotine"/>
    <property type="evidence" value="ECO:0007669"/>
    <property type="project" value="Ensembl"/>
</dbReference>
<dbReference type="GO" id="GO:0007584">
    <property type="term" value="P:response to nutrient"/>
    <property type="evidence" value="ECO:0007669"/>
    <property type="project" value="Ensembl"/>
</dbReference>
<dbReference type="GO" id="GO:0010043">
    <property type="term" value="P:response to zinc ion"/>
    <property type="evidence" value="ECO:0007669"/>
    <property type="project" value="Ensembl"/>
</dbReference>
<dbReference type="CDD" id="cd04979">
    <property type="entry name" value="Ig_Semaphorin_C"/>
    <property type="match status" value="1"/>
</dbReference>
<dbReference type="CDD" id="cd07689">
    <property type="entry name" value="IgC2_VCAM-1"/>
    <property type="match status" value="2"/>
</dbReference>
<dbReference type="CDD" id="cd20943">
    <property type="entry name" value="IgI_VCAM-1"/>
    <property type="match status" value="2"/>
</dbReference>
<dbReference type="FunFam" id="2.60.40.10:FF:000625">
    <property type="entry name" value="Vascular cell adhesion molecule 1"/>
    <property type="match status" value="2"/>
</dbReference>
<dbReference type="FunFam" id="2.60.40.10:FF:000671">
    <property type="entry name" value="Vascular cell adhesion molecule 1"/>
    <property type="match status" value="2"/>
</dbReference>
<dbReference type="FunFam" id="2.60.40.10:FF:000782">
    <property type="entry name" value="Vascular cell adhesion molecule 1"/>
    <property type="match status" value="2"/>
</dbReference>
<dbReference type="FunFam" id="2.60.40.10:FF:000817">
    <property type="entry name" value="Vascular cell adhesion molecule 1"/>
    <property type="match status" value="1"/>
</dbReference>
<dbReference type="Gene3D" id="2.60.40.10">
    <property type="entry name" value="Immunoglobulins"/>
    <property type="match status" value="7"/>
</dbReference>
<dbReference type="InterPro" id="IPR047012">
    <property type="entry name" value="ICAM_VCAM"/>
</dbReference>
<dbReference type="InterPro" id="IPR003987">
    <property type="entry name" value="ICAM_VCAM_N"/>
</dbReference>
<dbReference type="InterPro" id="IPR007110">
    <property type="entry name" value="Ig-like_dom"/>
</dbReference>
<dbReference type="InterPro" id="IPR036179">
    <property type="entry name" value="Ig-like_dom_sf"/>
</dbReference>
<dbReference type="InterPro" id="IPR013783">
    <property type="entry name" value="Ig-like_fold"/>
</dbReference>
<dbReference type="InterPro" id="IPR008424">
    <property type="entry name" value="Ig_C2-set"/>
</dbReference>
<dbReference type="InterPro" id="IPR013098">
    <property type="entry name" value="Ig_I-set"/>
</dbReference>
<dbReference type="InterPro" id="IPR003599">
    <property type="entry name" value="Ig_sub"/>
</dbReference>
<dbReference type="InterPro" id="IPR003598">
    <property type="entry name" value="Ig_sub2"/>
</dbReference>
<dbReference type="InterPro" id="IPR013106">
    <property type="entry name" value="Ig_V-set"/>
</dbReference>
<dbReference type="InterPro" id="IPR013151">
    <property type="entry name" value="Immunoglobulin_dom"/>
</dbReference>
<dbReference type="InterPro" id="IPR003989">
    <property type="entry name" value="VCAM-1"/>
</dbReference>
<dbReference type="PANTHER" id="PTHR13771">
    <property type="entry name" value="INTERCELLULAR ADHESION MOLECULE"/>
    <property type="match status" value="1"/>
</dbReference>
<dbReference type="PANTHER" id="PTHR13771:SF14">
    <property type="entry name" value="VASCULAR CELL ADHESION PROTEIN 1"/>
    <property type="match status" value="1"/>
</dbReference>
<dbReference type="Pfam" id="PF05790">
    <property type="entry name" value="C2-set"/>
    <property type="match status" value="2"/>
</dbReference>
<dbReference type="Pfam" id="PF07679">
    <property type="entry name" value="I-set"/>
    <property type="match status" value="2"/>
</dbReference>
<dbReference type="Pfam" id="PF00047">
    <property type="entry name" value="ig"/>
    <property type="match status" value="1"/>
</dbReference>
<dbReference type="Pfam" id="PF13927">
    <property type="entry name" value="Ig_3"/>
    <property type="match status" value="2"/>
</dbReference>
<dbReference type="PRINTS" id="PR01472">
    <property type="entry name" value="ICAMVCAM1"/>
</dbReference>
<dbReference type="PRINTS" id="PR01474">
    <property type="entry name" value="VCAM1"/>
</dbReference>
<dbReference type="SMART" id="SM00409">
    <property type="entry name" value="IG"/>
    <property type="match status" value="5"/>
</dbReference>
<dbReference type="SMART" id="SM00408">
    <property type="entry name" value="IGc2"/>
    <property type="match status" value="5"/>
</dbReference>
<dbReference type="SMART" id="SM00406">
    <property type="entry name" value="IGv"/>
    <property type="match status" value="2"/>
</dbReference>
<dbReference type="SUPFAM" id="SSF48726">
    <property type="entry name" value="Immunoglobulin"/>
    <property type="match status" value="7"/>
</dbReference>
<dbReference type="PROSITE" id="PS50835">
    <property type="entry name" value="IG_LIKE"/>
    <property type="match status" value="5"/>
</dbReference>
<name>VCAM1_HUMAN</name>
<organism>
    <name type="scientific">Homo sapiens</name>
    <name type="common">Human</name>
    <dbReference type="NCBI Taxonomy" id="9606"/>
    <lineage>
        <taxon>Eukaryota</taxon>
        <taxon>Metazoa</taxon>
        <taxon>Chordata</taxon>
        <taxon>Craniata</taxon>
        <taxon>Vertebrata</taxon>
        <taxon>Euteleostomi</taxon>
        <taxon>Mammalia</taxon>
        <taxon>Eutheria</taxon>
        <taxon>Euarchontoglires</taxon>
        <taxon>Primates</taxon>
        <taxon>Haplorrhini</taxon>
        <taxon>Catarrhini</taxon>
        <taxon>Hominidae</taxon>
        <taxon>Homo</taxon>
    </lineage>
</organism>
<comment type="function">
    <text evidence="3 7 8 9">Cell adhesion glycoprotein predominantly expressed on the surface of endothelial cells that plays an important role in immune surveillance and inflammation (PubMed:31310649). Acts as a major regulator of leukocyte adhesion to the endothelium through interaction with different types of integrins (PubMed:10209034). During inflammatory responses, binds ligands on the surface of activated endothelial cells to initiate the activation of calcium channels and the plasma membrane-associated small GTPase RAC1 leading to leukocyte transendothelial migration (PubMed:22970700). Also serves as a quality-control checkpoint for entry into bone marrow by providing a 'don't-eat-me' stamping in the context of major histocompatibility complex (MHC) class-I presentation (PubMed:35210567).</text>
</comment>
<comment type="subcellular location">
    <molecule>Vascular cell adhesion protein 1</molecule>
    <subcellularLocation>
        <location evidence="16">Cell membrane</location>
        <topology>Single-pass type I membrane protein</topology>
    </subcellularLocation>
</comment>
<comment type="subcellular location">
    <molecule>Soluble Vascular Cell Adhesion Molecule-1</molecule>
    <subcellularLocation>
        <location evidence="4 10">Secreted</location>
    </subcellularLocation>
</comment>
<comment type="alternative products">
    <event type="alternative splicing"/>
    <isoform>
        <id>P19320-1</id>
        <name>1</name>
        <name>Long</name>
        <name>VCAM-7D</name>
        <sequence type="displayed"/>
    </isoform>
    <isoform>
        <id>P19320-2</id>
        <name>2</name>
        <name>Short</name>
        <name>VCAM-6D</name>
        <sequence type="described" ref="VSP_002580"/>
    </isoform>
    <isoform>
        <id>P19320-3</id>
        <name>3</name>
        <sequence type="described" ref="VSP_044636"/>
    </isoform>
    <text>Additional isoforms seem to exist.</text>
</comment>
<comment type="tissue specificity">
    <text>Expressed on inflamed vascular endothelium, as well as on macrophage-like and dendritic cell types in both normal and inflamed tissue.</text>
</comment>
<comment type="induction">
    <text>By pro-inflammatory cytokines, including TNFalpha, and also by ROS, oxidized low density lipoprotein, high glucose concentration, toll-like receptor agonists, and shear stress.</text>
</comment>
<comment type="domain">
    <text>Either the first or the fourth Ig-like C2-type domain is required for VLA4-dependent cell adhesion.</text>
</comment>
<comment type="PTM">
    <text evidence="4">Cleaved by the metalloproteinase ADAM17 to generate the soluble form.</text>
</comment>
<comment type="PTM">
    <text>Sialoglycoprotein.</text>
</comment>
<comment type="PTM">
    <text evidence="8">Ubiquitinated by TRIM65 via 'Lys-48'-linked ubiquitination; leading to proteasomal degradation.</text>
</comment>
<comment type="miscellaneous">
    <molecule>Isoform 1</molecule>
    <text>Major isoform.</text>
</comment>
<comment type="online information" name="Wikipedia">
    <link uri="https://en.wikipedia.org/wiki/VCAM1"/>
    <text>VCAM1 entry</text>
</comment>
<comment type="online information" name="Functional Glycomics Gateway - Glycan Binding">
    <link uri="http://www.functionalglycomics.org/glycomics/GBPServlet?&amp;operationType=view&amp;cbpId=cbp_hum_Itlect_266"/>
    <text>VCAM-1</text>
</comment>
<reference key="1">
    <citation type="journal article" date="1989" name="Cell">
        <title>Direct expression cloning of vascular cell adhesion molecule 1, a cytokine-induced endothelial protein that binds to lymphocytes.</title>
        <authorList>
            <person name="Osborn L."/>
            <person name="Hession C."/>
            <person name="Tizard R."/>
            <person name="Vassallo C."/>
            <person name="Luhowskyj S."/>
            <person name="Chi-Rosso G."/>
            <person name="Lobb R."/>
        </authorList>
    </citation>
    <scope>NUCLEOTIDE SEQUENCE [MRNA] (ISOFORM 2)</scope>
</reference>
<reference key="2">
    <citation type="journal article" date="1990" name="Nucleic Acids Res.">
        <title>Full length vascular cell adhesion molecule 1 (VCAM-1).</title>
        <authorList>
            <person name="Polte T."/>
            <person name="Newman W."/>
            <person name="Gopal T.V."/>
        </authorList>
    </citation>
    <scope>NUCLEOTIDE SEQUENCE [MRNA] (ISOFORM 1)</scope>
    <source>
        <tissue>Umbilical vein</tissue>
    </source>
</reference>
<reference key="3">
    <citation type="journal article" date="1991" name="J. Biol. Chem.">
        <title>Cloning of an alternate form of vascular cell adhesion molecule-1 (VCAM1).</title>
        <authorList>
            <person name="Hession C."/>
            <person name="Tizard R."/>
            <person name="Vassallo C."/>
            <person name="Schiffer S.B."/>
            <person name="Goff D."/>
            <person name="Moy P."/>
            <person name="Chi-Rosso G."/>
            <person name="Luhowskyj S."/>
            <person name="Lobb R."/>
            <person name="Osborn L."/>
        </authorList>
    </citation>
    <scope>NUCLEOTIDE SEQUENCE [MRNA] (ISOFORM 1)</scope>
</reference>
<reference key="4">
    <citation type="journal article" date="1991" name="Proc. Natl. Acad. Sci. U.S.A.">
        <title>Gene structure, chromosomal location, and basis for alternative mRNA splicing of the human VCAM1 gene.</title>
        <authorList>
            <person name="Cybulsky M.I."/>
            <person name="Fries J.W.U."/>
            <person name="Williams A.J."/>
            <person name="Sultan P."/>
            <person name="Eddy R."/>
            <person name="Byers M."/>
            <person name="Shows T."/>
            <person name="Gimbrone M.A. Jr."/>
            <person name="Collins T."/>
        </authorList>
    </citation>
    <scope>NUCLEOTIDE SEQUENCE [GENOMIC DNA] (ISOFORM 1)</scope>
    <scope>ALTERNATIVE SPLICING</scope>
</reference>
<reference key="5">
    <citation type="submission" date="2002-08" db="EMBL/GenBank/DDBJ databases">
        <authorList>
            <consortium name="SeattleSNPs variation discovery resource"/>
        </authorList>
    </citation>
    <scope>NUCLEOTIDE SEQUENCE [GENOMIC DNA]</scope>
    <scope>VARIANTS PHE-318; ALA-384; ALA-413 AND LEU-716</scope>
</reference>
<reference key="6">
    <citation type="journal article" date="2004" name="Nat. Genet.">
        <title>Complete sequencing and characterization of 21,243 full-length human cDNAs.</title>
        <authorList>
            <person name="Ota T."/>
            <person name="Suzuki Y."/>
            <person name="Nishikawa T."/>
            <person name="Otsuki T."/>
            <person name="Sugiyama T."/>
            <person name="Irie R."/>
            <person name="Wakamatsu A."/>
            <person name="Hayashi K."/>
            <person name="Sato H."/>
            <person name="Nagai K."/>
            <person name="Kimura K."/>
            <person name="Makita H."/>
            <person name="Sekine M."/>
            <person name="Obayashi M."/>
            <person name="Nishi T."/>
            <person name="Shibahara T."/>
            <person name="Tanaka T."/>
            <person name="Ishii S."/>
            <person name="Yamamoto J."/>
            <person name="Saito K."/>
            <person name="Kawai Y."/>
            <person name="Isono Y."/>
            <person name="Nakamura Y."/>
            <person name="Nagahari K."/>
            <person name="Murakami K."/>
            <person name="Yasuda T."/>
            <person name="Iwayanagi T."/>
            <person name="Wagatsuma M."/>
            <person name="Shiratori A."/>
            <person name="Sudo H."/>
            <person name="Hosoiri T."/>
            <person name="Kaku Y."/>
            <person name="Kodaira H."/>
            <person name="Kondo H."/>
            <person name="Sugawara M."/>
            <person name="Takahashi M."/>
            <person name="Kanda K."/>
            <person name="Yokoi T."/>
            <person name="Furuya T."/>
            <person name="Kikkawa E."/>
            <person name="Omura Y."/>
            <person name="Abe K."/>
            <person name="Kamihara K."/>
            <person name="Katsuta N."/>
            <person name="Sato K."/>
            <person name="Tanikawa M."/>
            <person name="Yamazaki M."/>
            <person name="Ninomiya K."/>
            <person name="Ishibashi T."/>
            <person name="Yamashita H."/>
            <person name="Murakawa K."/>
            <person name="Fujimori K."/>
            <person name="Tanai H."/>
            <person name="Kimata M."/>
            <person name="Watanabe M."/>
            <person name="Hiraoka S."/>
            <person name="Chiba Y."/>
            <person name="Ishida S."/>
            <person name="Ono Y."/>
            <person name="Takiguchi S."/>
            <person name="Watanabe S."/>
            <person name="Yosida M."/>
            <person name="Hotuta T."/>
            <person name="Kusano J."/>
            <person name="Kanehori K."/>
            <person name="Takahashi-Fujii A."/>
            <person name="Hara H."/>
            <person name="Tanase T.-O."/>
            <person name="Nomura Y."/>
            <person name="Togiya S."/>
            <person name="Komai F."/>
            <person name="Hara R."/>
            <person name="Takeuchi K."/>
            <person name="Arita M."/>
            <person name="Imose N."/>
            <person name="Musashino K."/>
            <person name="Yuuki H."/>
            <person name="Oshima A."/>
            <person name="Sasaki N."/>
            <person name="Aotsuka S."/>
            <person name="Yoshikawa Y."/>
            <person name="Matsunawa H."/>
            <person name="Ichihara T."/>
            <person name="Shiohata N."/>
            <person name="Sano S."/>
            <person name="Moriya S."/>
            <person name="Momiyama H."/>
            <person name="Satoh N."/>
            <person name="Takami S."/>
            <person name="Terashima Y."/>
            <person name="Suzuki O."/>
            <person name="Nakagawa S."/>
            <person name="Senoh A."/>
            <person name="Mizoguchi H."/>
            <person name="Goto Y."/>
            <person name="Shimizu F."/>
            <person name="Wakebe H."/>
            <person name="Hishigaki H."/>
            <person name="Watanabe T."/>
            <person name="Sugiyama A."/>
            <person name="Takemoto M."/>
            <person name="Kawakami B."/>
            <person name="Yamazaki M."/>
            <person name="Watanabe K."/>
            <person name="Kumagai A."/>
            <person name="Itakura S."/>
            <person name="Fukuzumi Y."/>
            <person name="Fujimori Y."/>
            <person name="Komiyama M."/>
            <person name="Tashiro H."/>
            <person name="Tanigami A."/>
            <person name="Fujiwara T."/>
            <person name="Ono T."/>
            <person name="Yamada K."/>
            <person name="Fujii Y."/>
            <person name="Ozaki K."/>
            <person name="Hirao M."/>
            <person name="Ohmori Y."/>
            <person name="Kawabata A."/>
            <person name="Hikiji T."/>
            <person name="Kobatake N."/>
            <person name="Inagaki H."/>
            <person name="Ikema Y."/>
            <person name="Okamoto S."/>
            <person name="Okitani R."/>
            <person name="Kawakami T."/>
            <person name="Noguchi S."/>
            <person name="Itoh T."/>
            <person name="Shigeta K."/>
            <person name="Senba T."/>
            <person name="Matsumura K."/>
            <person name="Nakajima Y."/>
            <person name="Mizuno T."/>
            <person name="Morinaga M."/>
            <person name="Sasaki M."/>
            <person name="Togashi T."/>
            <person name="Oyama M."/>
            <person name="Hata H."/>
            <person name="Watanabe M."/>
            <person name="Komatsu T."/>
            <person name="Mizushima-Sugano J."/>
            <person name="Satoh T."/>
            <person name="Shirai Y."/>
            <person name="Takahashi Y."/>
            <person name="Nakagawa K."/>
            <person name="Okumura K."/>
            <person name="Nagase T."/>
            <person name="Nomura N."/>
            <person name="Kikuchi H."/>
            <person name="Masuho Y."/>
            <person name="Yamashita R."/>
            <person name="Nakai K."/>
            <person name="Yada T."/>
            <person name="Nakamura Y."/>
            <person name="Ohara O."/>
            <person name="Isogai T."/>
            <person name="Sugano S."/>
        </authorList>
    </citation>
    <scope>NUCLEOTIDE SEQUENCE [LARGE SCALE MRNA] (ISOFORMS 1 AND 3)</scope>
    <source>
        <tissue>Placenta</tissue>
        <tissue>Tongue</tissue>
    </source>
</reference>
<reference key="7">
    <citation type="journal article" date="2006" name="Nature">
        <title>The DNA sequence and biological annotation of human chromosome 1.</title>
        <authorList>
            <person name="Gregory S.G."/>
            <person name="Barlow K.F."/>
            <person name="McLay K.E."/>
            <person name="Kaul R."/>
            <person name="Swarbreck D."/>
            <person name="Dunham A."/>
            <person name="Scott C.E."/>
            <person name="Howe K.L."/>
            <person name="Woodfine K."/>
            <person name="Spencer C.C.A."/>
            <person name="Jones M.C."/>
            <person name="Gillson C."/>
            <person name="Searle S."/>
            <person name="Zhou Y."/>
            <person name="Kokocinski F."/>
            <person name="McDonald L."/>
            <person name="Evans R."/>
            <person name="Phillips K."/>
            <person name="Atkinson A."/>
            <person name="Cooper R."/>
            <person name="Jones C."/>
            <person name="Hall R.E."/>
            <person name="Andrews T.D."/>
            <person name="Lloyd C."/>
            <person name="Ainscough R."/>
            <person name="Almeida J.P."/>
            <person name="Ambrose K.D."/>
            <person name="Anderson F."/>
            <person name="Andrew R.W."/>
            <person name="Ashwell R.I.S."/>
            <person name="Aubin K."/>
            <person name="Babbage A.K."/>
            <person name="Bagguley C.L."/>
            <person name="Bailey J."/>
            <person name="Beasley H."/>
            <person name="Bethel G."/>
            <person name="Bird C.P."/>
            <person name="Bray-Allen S."/>
            <person name="Brown J.Y."/>
            <person name="Brown A.J."/>
            <person name="Buckley D."/>
            <person name="Burton J."/>
            <person name="Bye J."/>
            <person name="Carder C."/>
            <person name="Chapman J.C."/>
            <person name="Clark S.Y."/>
            <person name="Clarke G."/>
            <person name="Clee C."/>
            <person name="Cobley V."/>
            <person name="Collier R.E."/>
            <person name="Corby N."/>
            <person name="Coville G.J."/>
            <person name="Davies J."/>
            <person name="Deadman R."/>
            <person name="Dunn M."/>
            <person name="Earthrowl M."/>
            <person name="Ellington A.G."/>
            <person name="Errington H."/>
            <person name="Frankish A."/>
            <person name="Frankland J."/>
            <person name="French L."/>
            <person name="Garner P."/>
            <person name="Garnett J."/>
            <person name="Gay L."/>
            <person name="Ghori M.R.J."/>
            <person name="Gibson R."/>
            <person name="Gilby L.M."/>
            <person name="Gillett W."/>
            <person name="Glithero R.J."/>
            <person name="Grafham D.V."/>
            <person name="Griffiths C."/>
            <person name="Griffiths-Jones S."/>
            <person name="Grocock R."/>
            <person name="Hammond S."/>
            <person name="Harrison E.S.I."/>
            <person name="Hart E."/>
            <person name="Haugen E."/>
            <person name="Heath P.D."/>
            <person name="Holmes S."/>
            <person name="Holt K."/>
            <person name="Howden P.J."/>
            <person name="Hunt A.R."/>
            <person name="Hunt S.E."/>
            <person name="Hunter G."/>
            <person name="Isherwood J."/>
            <person name="James R."/>
            <person name="Johnson C."/>
            <person name="Johnson D."/>
            <person name="Joy A."/>
            <person name="Kay M."/>
            <person name="Kershaw J.K."/>
            <person name="Kibukawa M."/>
            <person name="Kimberley A.M."/>
            <person name="King A."/>
            <person name="Knights A.J."/>
            <person name="Lad H."/>
            <person name="Laird G."/>
            <person name="Lawlor S."/>
            <person name="Leongamornlert D.A."/>
            <person name="Lloyd D.M."/>
            <person name="Loveland J."/>
            <person name="Lovell J."/>
            <person name="Lush M.J."/>
            <person name="Lyne R."/>
            <person name="Martin S."/>
            <person name="Mashreghi-Mohammadi M."/>
            <person name="Matthews L."/>
            <person name="Matthews N.S.W."/>
            <person name="McLaren S."/>
            <person name="Milne S."/>
            <person name="Mistry S."/>
            <person name="Moore M.J.F."/>
            <person name="Nickerson T."/>
            <person name="O'Dell C.N."/>
            <person name="Oliver K."/>
            <person name="Palmeiri A."/>
            <person name="Palmer S.A."/>
            <person name="Parker A."/>
            <person name="Patel D."/>
            <person name="Pearce A.V."/>
            <person name="Peck A.I."/>
            <person name="Pelan S."/>
            <person name="Phelps K."/>
            <person name="Phillimore B.J."/>
            <person name="Plumb R."/>
            <person name="Rajan J."/>
            <person name="Raymond C."/>
            <person name="Rouse G."/>
            <person name="Saenphimmachak C."/>
            <person name="Sehra H.K."/>
            <person name="Sheridan E."/>
            <person name="Shownkeen R."/>
            <person name="Sims S."/>
            <person name="Skuce C.D."/>
            <person name="Smith M."/>
            <person name="Steward C."/>
            <person name="Subramanian S."/>
            <person name="Sycamore N."/>
            <person name="Tracey A."/>
            <person name="Tromans A."/>
            <person name="Van Helmond Z."/>
            <person name="Wall M."/>
            <person name="Wallis J.M."/>
            <person name="White S."/>
            <person name="Whitehead S.L."/>
            <person name="Wilkinson J.E."/>
            <person name="Willey D.L."/>
            <person name="Williams H."/>
            <person name="Wilming L."/>
            <person name="Wray P.W."/>
            <person name="Wu Z."/>
            <person name="Coulson A."/>
            <person name="Vaudin M."/>
            <person name="Sulston J.E."/>
            <person name="Durbin R.M."/>
            <person name="Hubbard T."/>
            <person name="Wooster R."/>
            <person name="Dunham I."/>
            <person name="Carter N.P."/>
            <person name="McVean G."/>
            <person name="Ross M.T."/>
            <person name="Harrow J."/>
            <person name="Olson M.V."/>
            <person name="Beck S."/>
            <person name="Rogers J."/>
            <person name="Bentley D.R."/>
        </authorList>
    </citation>
    <scope>NUCLEOTIDE SEQUENCE [LARGE SCALE GENOMIC DNA]</scope>
</reference>
<reference key="8">
    <citation type="submission" date="2005-09" db="EMBL/GenBank/DDBJ databases">
        <authorList>
            <person name="Mural R.J."/>
            <person name="Istrail S."/>
            <person name="Sutton G.G."/>
            <person name="Florea L."/>
            <person name="Halpern A.L."/>
            <person name="Mobarry C.M."/>
            <person name="Lippert R."/>
            <person name="Walenz B."/>
            <person name="Shatkay H."/>
            <person name="Dew I."/>
            <person name="Miller J.R."/>
            <person name="Flanigan M.J."/>
            <person name="Edwards N.J."/>
            <person name="Bolanos R."/>
            <person name="Fasulo D."/>
            <person name="Halldorsson B.V."/>
            <person name="Hannenhalli S."/>
            <person name="Turner R."/>
            <person name="Yooseph S."/>
            <person name="Lu F."/>
            <person name="Nusskern D.R."/>
            <person name="Shue B.C."/>
            <person name="Zheng X.H."/>
            <person name="Zhong F."/>
            <person name="Delcher A.L."/>
            <person name="Huson D.H."/>
            <person name="Kravitz S.A."/>
            <person name="Mouchard L."/>
            <person name="Reinert K."/>
            <person name="Remington K.A."/>
            <person name="Clark A.G."/>
            <person name="Waterman M.S."/>
            <person name="Eichler E.E."/>
            <person name="Adams M.D."/>
            <person name="Hunkapiller M.W."/>
            <person name="Myers E.W."/>
            <person name="Venter J.C."/>
        </authorList>
    </citation>
    <scope>NUCLEOTIDE SEQUENCE [LARGE SCALE GENOMIC DNA]</scope>
</reference>
<reference key="9">
    <citation type="journal article" date="2004" name="Genome Res.">
        <title>The status, quality, and expansion of the NIH full-length cDNA project: the Mammalian Gene Collection (MGC).</title>
        <authorList>
            <consortium name="The MGC Project Team"/>
        </authorList>
    </citation>
    <scope>NUCLEOTIDE SEQUENCE [LARGE SCALE MRNA] (ISOFORM 1)</scope>
    <source>
        <tissue>Retinal pigment epithelium</tissue>
    </source>
</reference>
<reference key="10">
    <citation type="journal article" date="1992" name="J. Biol. Chem.">
        <title>Characterization of the promoter for vascular cell adhesion molecule-1 (VCAM-1).</title>
        <authorList>
            <person name="Iademarco M.F."/>
            <person name="McQuillan J.J."/>
            <person name="Rosen G.D."/>
            <person name="Dean D.C."/>
        </authorList>
    </citation>
    <scope>NUCLEOTIDE SEQUENCE [GENOMIC DNA] OF 1-21</scope>
</reference>
<reference key="11">
    <citation type="journal article" date="1991" name="Am. J. Pathol.">
        <title>Alternative splicing of human VCAM-1 in activated vascular endothelium.</title>
        <authorList>
            <person name="Cybulsky M.I."/>
            <person name="Fries J.W."/>
            <person name="Williams A.J."/>
            <person name="Sultan P."/>
            <person name="Davis V.M."/>
            <person name="Gimbrone M.A. Jr."/>
            <person name="Collins T."/>
        </authorList>
    </citation>
    <scope>NUCLEOTIDE SEQUENCE OF 25-686 (ISOFORMS 1 AND 2)</scope>
    <source>
        <tissue>Umbilical vein endothelial cell</tissue>
    </source>
</reference>
<reference key="12">
    <citation type="journal article" date="1992" name="J. Exp. Med.">
        <title>Activated endothelium binds lymphocytes through a novel binding site in the alternately spliced domain of vascular cell adhesion molecule-1.</title>
        <authorList>
            <person name="Osborn L."/>
            <person name="Vassallo C."/>
            <person name="Benjamin C.D."/>
        </authorList>
    </citation>
    <scope>NUCLEOTIDE SEQUENCE OF 25-402 (ISOFORMS 1 AND 2)</scope>
    <scope>CELL ADHESION DOMAIN</scope>
    <source>
        <tissue>Endothelial cell</tissue>
    </source>
</reference>
<reference key="13">
    <citation type="journal article" date="1999" name="J. Cell Biol.">
        <title>The integrin alpha9beta1 mediates adhesion to activated endothelial cells and transendothelial neutrophil migration through interaction with vascular cell adhesion molecule-1.</title>
        <authorList>
            <person name="Taooka Y."/>
            <person name="Chen J."/>
            <person name="Yednock T."/>
            <person name="Sheppard D."/>
        </authorList>
    </citation>
    <scope>FUNCTION</scope>
</reference>
<reference key="14">
    <citation type="journal article" date="2003" name="J. Biol. Chem.">
        <title>Stimulated shedding of vascular cell adhesion molecule 1 (VCAM-1) is mediated by tumor necrosis factor-alpha-converting enzyme (ADAM 17).</title>
        <authorList>
            <person name="Garton K.J."/>
            <person name="Gough P.J."/>
            <person name="Philalay J."/>
            <person name="Wille P.T."/>
            <person name="Blobel C.P."/>
            <person name="Whitehead R.H."/>
            <person name="Dempsey P.J."/>
            <person name="Raines E.W."/>
        </authorList>
    </citation>
    <scope>FUNCTION</scope>
    <scope>SUBCELLULAR LOCATION</scope>
    <scope>PROTEOLYTIC CLEAVAGE</scope>
</reference>
<reference key="15">
    <citation type="journal article" date="2004" name="Protein Sci.">
        <title>Signal peptide prediction based on analysis of experimentally verified cleavage sites.</title>
        <authorList>
            <person name="Zhang Z."/>
            <person name="Henzel W.J."/>
        </authorList>
    </citation>
    <scope>PROTEIN SEQUENCE OF 25-39</scope>
</reference>
<reference key="16">
    <citation type="journal article" date="2005" name="J. Proteome Res.">
        <title>Human plasma N-glycoproteome analysis by immunoaffinity subtraction, hydrazide chemistry, and mass spectrometry.</title>
        <authorList>
            <person name="Liu T."/>
            <person name="Qian W.-J."/>
            <person name="Gritsenko M.A."/>
            <person name="Camp D.G. II"/>
            <person name="Monroe M.E."/>
            <person name="Moore R.J."/>
            <person name="Smith R.D."/>
        </authorList>
    </citation>
    <scope>GLYCOSYLATION [LARGE SCALE ANALYSIS] AT ASN-561</scope>
    <source>
        <tissue>Plasma</tissue>
    </source>
</reference>
<reference key="17">
    <citation type="journal article" date="2012" name="Biochemistry">
        <title>Distinct sites within the vascular cell adhesion molecule-1 (VCAM-1) cytoplasmic domain regulate VCAM-1 activation of calcium fluxes versus Rac1 during leukocyte transendothelial migration.</title>
        <authorList>
            <person name="Marchese M.E."/>
            <person name="Berdnikovs S."/>
            <person name="Cook-Mills J.M."/>
        </authorList>
    </citation>
    <scope>FUNCTION</scope>
    <scope>MUTAGENESIS OF SER-730 AND SER-737</scope>
</reference>
<reference key="18">
    <citation type="journal article" date="2020" name="J. Mol. Cell Biol.">
        <title>TRIM65 E3 ligase targets VCAM-1 degradation to limit LPS-induced lung inflammation.</title>
        <authorList>
            <person name="Li Y."/>
            <person name="Huang X."/>
            <person name="Guo F."/>
            <person name="Lei T."/>
            <person name="Li S."/>
            <person name="Monaghan-Nichols P."/>
            <person name="Jiang Z."/>
            <person name="Xin H.B."/>
            <person name="Fu M."/>
        </authorList>
    </citation>
    <scope>FUNCTION</scope>
    <scope>UBIQUITINATION BY TRIM65</scope>
</reference>
<reference key="19">
    <citation type="journal article" date="2022" name="BMC Cancer">
        <title>The soluble VCAM-1 level is a potential biomarker predicting severe acute graft versus host disease after allogeneic hematopoietic cell transplantation.</title>
        <authorList>
            <person name="Heo S.K."/>
            <person name="Noh E.K."/>
            <person name="Lee Y.J."/>
            <person name="Shin Y."/>
            <person name="Kim Y."/>
            <person name="Im H.S."/>
            <person name="Kim H."/>
            <person name="Koh S.J."/>
            <person name="Min Y.J."/>
            <person name="Jo J.C."/>
            <person name="Choi Y."/>
        </authorList>
    </citation>
    <scope>SUBCELLULAR LOCATION</scope>
</reference>
<reference key="20">
    <citation type="journal article" date="2022" name="Nat. Cell Biol.">
        <title>VCAM1 confers innate immune tolerance on haematopoietic and leukaemic stem cells.</title>
        <authorList>
            <person name="Pinho S."/>
            <person name="Wei Q."/>
            <person name="Maryanovich M."/>
            <person name="Zhang D."/>
            <person name="Balandran J.C."/>
            <person name="Pierce H."/>
            <person name="Nakahara F."/>
            <person name="Di Staulo A."/>
            <person name="Bartholdy B.A."/>
            <person name="Xu J."/>
            <person name="Borger D.K."/>
            <person name="Verma A."/>
            <person name="Frenette P.S."/>
        </authorList>
    </citation>
    <scope>FUNCTION</scope>
</reference>
<reference key="21">
    <citation type="journal article" date="1995" name="Nature">
        <title>Crystal structure of an integrin-binding fragment of vascular cell adhesion molecule-1 at 1.8-A resolution.</title>
        <authorList>
            <person name="Jones E.Y."/>
            <person name="Harlos K."/>
            <person name="Bottomley M.J."/>
            <person name="Robinson R.C."/>
            <person name="Driscoll P.C."/>
            <person name="Edwards R.M."/>
            <person name="Clements J.M."/>
            <person name="Dudgeon T.J."/>
            <person name="Stuart D.I."/>
        </authorList>
    </citation>
    <scope>X-RAY CRYSTALLOGRAPHY (1.8 ANGSTROMS) OF 25-226</scope>
</reference>
<reference key="22">
    <citation type="journal article" date="1995" name="Proc. Natl. Acad. Sci. U.S.A.">
        <title>The crystal structure of an N-terminal two-domain fragment of vascular cell adhesion molecule 1 (VCAM-1): a cyclic peptide based on the domain 1 C-D loop can inhibit VCAM-1-alpha 4 integrin interaction.</title>
        <authorList>
            <person name="Wang J.-H."/>
            <person name="Pepinsky R.B."/>
            <person name="Stehle T."/>
            <person name="Liu J.-H."/>
            <person name="Karpusas M."/>
            <person name="Browning B."/>
            <person name="Osborn L."/>
        </authorList>
    </citation>
    <scope>X-RAY CRYSTALLOGRAPHY (1.90 ANGSTROMS) OF 25-219</scope>
    <scope>DISULFIDE BONDS</scope>
</reference>
<reference key="23">
    <citation type="journal article" date="1996" name="Acta Crystallogr. D">
        <title>Structure of a functional fragment of VCAM-1 refined at 1.9-A resolution.</title>
        <authorList>
            <person name="Wang J.-H."/>
            <person name="Stehle T."/>
            <person name="Pepinsky R.B."/>
            <person name="Liu J.-H."/>
            <person name="Karpusas M."/>
            <person name="Osborn L."/>
        </authorList>
    </citation>
    <scope>X-RAY CRYSTALLOGRAPHY (1.9 ANGSTROMS) OF 25-220</scope>
</reference>
<sequence>MPGKMVVILGASNILWIMFAASQAFKIETTPESRYLAQIGDSVSLTCSTTGCESPFFSWRTQIDSPLNGKVTNEGTTSTLTMNPVSFGNEHSYLCTATCESRKLEKGIQVEIYSFPKDPEIHLSGPLEAGKPITVKCSVADVYPFDRLEIDLLKGDHLMKSQEFLEDADRKSLETKSLEVTFTPVIEDIGKVLVCRAKLHIDEMDSVPTVRQAVKELQVYISPKNTVISVNPSTKLQEGGSVTMTCSSEGLPAPEIFWSKKLDNGNLQHLSGNATLTLIAMRMEDSGIYVCEGVNLIGKNRKEVELIVQEKPFTVEISPGPRIAAQIGDSVMLTCSVMGCESPSFSWRTQIDSPLSGKVRSEGTNSTLTLSPVSFENEHSYLCTVTCGHKKLEKGIQVELYSFPRDPEIEMSGGLVNGSSVTVSCKVPSVYPLDRLEIELLKGETILENIEFLEDTDMKSLENKSLEMTFIPTIEDTGKALVCQAKLHIDDMEFEPKQRQSTQTLYVNVAPRDTTVLVSPSSILEEGSSVNMTCLSQGFPAPKILWSRQLPNGELQPLSENATLTLISTKMEDSGVYLCEGINQAGRSRKEVELIIQVTPKDIKLTAFPSESVKEGDTVIISCTCGNVPETWIILKKKAETGDTVLKSIDGAYTIRKAQLKDAGVYECESKNKVGSQLRSLTLDVQGRENNKDYFSPELLVLYFASSLIIPAIGMIIYFARKANMKGSYSLVEAQKSKV</sequence>
<gene>
    <name type="primary">VCAM1</name>
</gene>
<feature type="signal peptide" evidence="5">
    <location>
        <begin position="1"/>
        <end position="24"/>
    </location>
</feature>
<feature type="chain" id="PRO_0000014997" description="Vascular cell adhesion protein 1">
    <location>
        <begin position="25"/>
        <end position="739"/>
    </location>
</feature>
<feature type="chain" id="PRO_0000457762" description="Soluble Vascular Cell Adhesion Molecule-1">
    <location>
        <begin position="25"/>
        <end status="unknown"/>
    </location>
</feature>
<feature type="topological domain" description="Extracellular" evidence="1">
    <location>
        <begin position="25"/>
        <end position="698"/>
    </location>
</feature>
<feature type="transmembrane region" description="Helical" evidence="1">
    <location>
        <begin position="699"/>
        <end position="720"/>
    </location>
</feature>
<feature type="topological domain" description="Cytoplasmic" evidence="1">
    <location>
        <begin position="721"/>
        <end position="739"/>
    </location>
</feature>
<feature type="domain" description="Ig-like C2-type 1">
    <location>
        <begin position="25"/>
        <end position="105"/>
    </location>
</feature>
<feature type="domain" description="Ig-like C2-type 2">
    <location>
        <begin position="109"/>
        <end position="212"/>
    </location>
</feature>
<feature type="domain" description="Ig-like C2-type 3">
    <location>
        <begin position="223"/>
        <end position="309"/>
    </location>
</feature>
<feature type="domain" description="Ig-like C2-type 4">
    <location>
        <begin position="312"/>
        <end position="399"/>
    </location>
</feature>
<feature type="domain" description="Ig-like C2-type 5">
    <location>
        <begin position="408"/>
        <end position="506"/>
    </location>
</feature>
<feature type="domain" description="Ig-like C2-type 6">
    <location>
        <begin position="511"/>
        <end position="595"/>
    </location>
</feature>
<feature type="domain" description="Ig-like C2-type 7">
    <location>
        <begin position="600"/>
        <end position="684"/>
    </location>
</feature>
<feature type="glycosylation site" description="N-linked (GlcNAc...) asparagine" evidence="1">
    <location>
        <position position="273"/>
    </location>
</feature>
<feature type="glycosylation site" description="N-linked (GlcNAc...) asparagine" evidence="1">
    <location>
        <position position="365"/>
    </location>
</feature>
<feature type="glycosylation site" description="N-linked (GlcNAc...) asparagine" evidence="1">
    <location>
        <position position="417"/>
    </location>
</feature>
<feature type="glycosylation site" description="N-linked (GlcNAc...) asparagine" evidence="1">
    <location>
        <position position="463"/>
    </location>
</feature>
<feature type="glycosylation site" description="N-linked (GlcNAc...) asparagine" evidence="1">
    <location>
        <position position="531"/>
    </location>
</feature>
<feature type="glycosylation site" description="N-linked (GlcNAc...) asparagine" evidence="6">
    <location>
        <position position="561"/>
    </location>
</feature>
<feature type="disulfide bond" evidence="11">
    <location>
        <begin position="47"/>
        <end position="95"/>
    </location>
</feature>
<feature type="disulfide bond" evidence="11">
    <location>
        <begin position="52"/>
        <end position="99"/>
    </location>
</feature>
<feature type="disulfide bond" evidence="11">
    <location>
        <begin position="137"/>
        <end position="195"/>
    </location>
</feature>
<feature type="disulfide bond" evidence="2">
    <location>
        <begin position="246"/>
        <end position="291"/>
    </location>
</feature>
<feature type="disulfide bond" evidence="2">
    <location>
        <begin position="335"/>
        <end position="383"/>
    </location>
</feature>
<feature type="disulfide bond" evidence="2">
    <location>
        <begin position="534"/>
        <end position="579"/>
    </location>
</feature>
<feature type="splice variant" id="VSP_044636" description="In isoform 3." evidence="13">
    <location>
        <begin position="52"/>
        <end position="113"/>
    </location>
</feature>
<feature type="splice variant" id="VSP_002580" description="In isoform 2." evidence="14">
    <original>EKPFTVEISPGPRIAAQIGDSVMLTCSVMGCESPSFSWRTQIDSPLSGKVRSEGTNSTLTLSPVSFENEHSYLCTVTCGHKKLEKGIQVELYS</original>
    <variation>A</variation>
    <location>
        <begin position="310"/>
        <end position="402"/>
    </location>
</feature>
<feature type="sequence variant" id="VAR_049951" description="In dbSNP:rs34228330.">
    <original>M</original>
    <variation>I</variation>
    <location>
        <position position="18"/>
    </location>
</feature>
<feature type="sequence variant" id="VAR_014309" description="In dbSNP:rs3783611." evidence="12">
    <original>S</original>
    <variation>F</variation>
    <location>
        <position position="318"/>
    </location>
</feature>
<feature type="sequence variant" id="VAR_014310" description="In dbSNP:rs3783612." evidence="12">
    <original>T</original>
    <variation>A</variation>
    <location>
        <position position="384"/>
    </location>
</feature>
<feature type="sequence variant" id="VAR_014311" description="In dbSNP:rs3783613." evidence="12">
    <original>G</original>
    <variation>A</variation>
    <location>
        <position position="413"/>
    </location>
</feature>
<feature type="sequence variant" id="VAR_049952" description="In dbSNP:rs34100871.">
    <original>V</original>
    <variation>I</variation>
    <location>
        <position position="421"/>
    </location>
</feature>
<feature type="sequence variant" id="VAR_049953" description="In dbSNP:rs34199378.">
    <original>H</original>
    <variation>R</variation>
    <location>
        <position position="488"/>
    </location>
</feature>
<feature type="sequence variant" id="VAR_014312" description="In dbSNP:rs3783615." evidence="12">
    <original>I</original>
    <variation>L</variation>
    <location>
        <position position="716"/>
    </location>
</feature>
<feature type="mutagenesis site" description="Loss of RAC1 activation and subsequent leukocyte transmigration." evidence="7">
    <original>S</original>
    <variation>A</variation>
    <location>
        <position position="730"/>
    </location>
</feature>
<feature type="mutagenesis site" description="Loss of RAC1 activation and subsequent leukocyte transmigration." evidence="7">
    <original>S</original>
    <variation>A</variation>
    <location>
        <position position="737"/>
    </location>
</feature>
<feature type="sequence conflict" description="In Ref. 12." evidence="15" ref="12">
    <original>F</original>
    <variation>G</variation>
    <location>
        <position position="182"/>
    </location>
</feature>
<feature type="sequence conflict" description="In Ref. 11." evidence="15" ref="11">
    <original>S</original>
    <variation>T</variation>
    <location>
        <position position="402"/>
    </location>
</feature>
<feature type="sequence conflict" description="In Ref. 6; BAG59286." evidence="15" ref="6">
    <original>S</original>
    <variation>P</variation>
    <location>
        <position position="728"/>
    </location>
</feature>
<feature type="strand" evidence="18">
    <location>
        <begin position="26"/>
        <end position="38"/>
    </location>
</feature>
<feature type="strand" evidence="18">
    <location>
        <begin position="43"/>
        <end position="51"/>
    </location>
</feature>
<feature type="strand" evidence="18">
    <location>
        <begin position="56"/>
        <end position="61"/>
    </location>
</feature>
<feature type="strand" evidence="18">
    <location>
        <begin position="68"/>
        <end position="74"/>
    </location>
</feature>
<feature type="strand" evidence="18">
    <location>
        <begin position="77"/>
        <end position="84"/>
    </location>
</feature>
<feature type="helix" evidence="18">
    <location>
        <begin position="87"/>
        <end position="89"/>
    </location>
</feature>
<feature type="strand" evidence="18">
    <location>
        <begin position="91"/>
        <end position="99"/>
    </location>
</feature>
<feature type="strand" evidence="18">
    <location>
        <begin position="102"/>
        <end position="114"/>
    </location>
</feature>
<feature type="strand" evidence="18">
    <location>
        <begin position="120"/>
        <end position="125"/>
    </location>
</feature>
<feature type="strand" evidence="18">
    <location>
        <begin position="133"/>
        <end position="144"/>
    </location>
</feature>
<feature type="helix" evidence="18">
    <location>
        <begin position="145"/>
        <end position="147"/>
    </location>
</feature>
<feature type="strand" evidence="18">
    <location>
        <begin position="148"/>
        <end position="154"/>
    </location>
</feature>
<feature type="strand" evidence="18">
    <location>
        <begin position="157"/>
        <end position="163"/>
    </location>
</feature>
<feature type="strand" evidence="17">
    <location>
        <begin position="169"/>
        <end position="171"/>
    </location>
</feature>
<feature type="strand" evidence="18">
    <location>
        <begin position="174"/>
        <end position="182"/>
    </location>
</feature>
<feature type="helix" evidence="18">
    <location>
        <begin position="186"/>
        <end position="188"/>
    </location>
</feature>
<feature type="strand" evidence="18">
    <location>
        <begin position="192"/>
        <end position="199"/>
    </location>
</feature>
<feature type="strand" evidence="18">
    <location>
        <begin position="209"/>
        <end position="216"/>
    </location>
</feature>
<protein>
    <recommendedName>
        <fullName>Vascular cell adhesion protein 1</fullName>
        <shortName>V-CAM 1</shortName>
        <shortName>VCAM-1</shortName>
    </recommendedName>
    <alternativeName>
        <fullName>INCAM-100</fullName>
    </alternativeName>
    <cdAntigenName>CD106</cdAntigenName>
    <component>
        <recommendedName>
            <fullName>Soluble Vascular Cell Adhesion Molecule-1</fullName>
        </recommendedName>
    </component>
</protein>
<evidence type="ECO:0000255" key="1"/>
<evidence type="ECO:0000255" key="2">
    <source>
        <dbReference type="PROSITE-ProRule" id="PRU00114"/>
    </source>
</evidence>
<evidence type="ECO:0000269" key="3">
    <source>
    </source>
</evidence>
<evidence type="ECO:0000269" key="4">
    <source>
    </source>
</evidence>
<evidence type="ECO:0000269" key="5">
    <source>
    </source>
</evidence>
<evidence type="ECO:0000269" key="6">
    <source>
    </source>
</evidence>
<evidence type="ECO:0000269" key="7">
    <source>
    </source>
</evidence>
<evidence type="ECO:0000269" key="8">
    <source>
    </source>
</evidence>
<evidence type="ECO:0000269" key="9">
    <source>
    </source>
</evidence>
<evidence type="ECO:0000269" key="10">
    <source>
    </source>
</evidence>
<evidence type="ECO:0000269" key="11">
    <source>
    </source>
</evidence>
<evidence type="ECO:0000269" key="12">
    <source ref="5"/>
</evidence>
<evidence type="ECO:0000303" key="13">
    <source>
    </source>
</evidence>
<evidence type="ECO:0000303" key="14">
    <source>
    </source>
</evidence>
<evidence type="ECO:0000305" key="15"/>
<evidence type="ECO:0000305" key="16">
    <source>
    </source>
</evidence>
<evidence type="ECO:0007829" key="17">
    <source>
        <dbReference type="PDB" id="1IJ9"/>
    </source>
</evidence>
<evidence type="ECO:0007829" key="18">
    <source>
        <dbReference type="PDB" id="1VCA"/>
    </source>
</evidence>
<proteinExistence type="evidence at protein level"/>
<keyword id="KW-0002">3D-structure</keyword>
<keyword id="KW-0025">Alternative splicing</keyword>
<keyword id="KW-0130">Cell adhesion</keyword>
<keyword id="KW-1003">Cell membrane</keyword>
<keyword id="KW-0903">Direct protein sequencing</keyword>
<keyword id="KW-1015">Disulfide bond</keyword>
<keyword id="KW-0325">Glycoprotein</keyword>
<keyword id="KW-0393">Immunoglobulin domain</keyword>
<keyword id="KW-0472">Membrane</keyword>
<keyword id="KW-1267">Proteomics identification</keyword>
<keyword id="KW-1185">Reference proteome</keyword>
<keyword id="KW-0677">Repeat</keyword>
<keyword id="KW-0964">Secreted</keyword>
<keyword id="KW-0732">Signal</keyword>
<keyword id="KW-0812">Transmembrane</keyword>
<keyword id="KW-1133">Transmembrane helix</keyword>
<keyword id="KW-0832">Ubl conjugation</keyword>